<reference key="1">
    <citation type="journal article" date="2010" name="PLoS ONE">
        <title>Genome sequence of Cronobacter sakazakii BAA-894 and comparative genomic hybridization analysis with other Cronobacter species.</title>
        <authorList>
            <person name="Kucerova E."/>
            <person name="Clifton S.W."/>
            <person name="Xia X.Q."/>
            <person name="Long F."/>
            <person name="Porwollik S."/>
            <person name="Fulton L."/>
            <person name="Fronick C."/>
            <person name="Minx P."/>
            <person name="Kyung K."/>
            <person name="Warren W."/>
            <person name="Fulton R."/>
            <person name="Feng D."/>
            <person name="Wollam A."/>
            <person name="Shah N."/>
            <person name="Bhonagiri V."/>
            <person name="Nash W.E."/>
            <person name="Hallsworth-Pepin K."/>
            <person name="Wilson R.K."/>
            <person name="McClelland M."/>
            <person name="Forsythe S.J."/>
        </authorList>
    </citation>
    <scope>NUCLEOTIDE SEQUENCE [LARGE SCALE GENOMIC DNA]</scope>
    <source>
        <strain>ATCC BAA-894</strain>
    </source>
</reference>
<keyword id="KW-1185">Reference proteome</keyword>
<sequence>MPGEIQVEVAYALPEKQYLRKVKLPEGASVEEAIIASGLLELRKDIDLKKNKVGIYSRPVKLADTLNDGDRVEIYRPLIADPKELRRQRAERAAKK</sequence>
<protein>
    <recommendedName>
        <fullName evidence="1">Protein RnfH</fullName>
    </recommendedName>
</protein>
<comment type="similarity">
    <text evidence="1">Belongs to the UPF0125 (RnfH) family.</text>
</comment>
<name>RNFH_CROS8</name>
<accession>A7MHX8</accession>
<feature type="chain" id="PRO_1000013573" description="Protein RnfH">
    <location>
        <begin position="1"/>
        <end position="96"/>
    </location>
</feature>
<evidence type="ECO:0000255" key="1">
    <source>
        <dbReference type="HAMAP-Rule" id="MF_00460"/>
    </source>
</evidence>
<proteinExistence type="inferred from homology"/>
<organism>
    <name type="scientific">Cronobacter sakazakii (strain ATCC BAA-894)</name>
    <name type="common">Enterobacter sakazakii</name>
    <dbReference type="NCBI Taxonomy" id="290339"/>
    <lineage>
        <taxon>Bacteria</taxon>
        <taxon>Pseudomonadati</taxon>
        <taxon>Pseudomonadota</taxon>
        <taxon>Gammaproteobacteria</taxon>
        <taxon>Enterobacterales</taxon>
        <taxon>Enterobacteriaceae</taxon>
        <taxon>Cronobacter</taxon>
    </lineage>
</organism>
<gene>
    <name evidence="1" type="primary">rnfH</name>
    <name type="ordered locus">ESA_00637</name>
</gene>
<dbReference type="EMBL" id="CP000783">
    <property type="protein sequence ID" value="ABU75920.1"/>
    <property type="molecule type" value="Genomic_DNA"/>
</dbReference>
<dbReference type="RefSeq" id="WP_004387955.1">
    <property type="nucleotide sequence ID" value="NC_009778.1"/>
</dbReference>
<dbReference type="SMR" id="A7MHX8"/>
<dbReference type="KEGG" id="esa:ESA_00637"/>
<dbReference type="HOGENOM" id="CLU_150721_1_0_6"/>
<dbReference type="Proteomes" id="UP000000260">
    <property type="component" value="Chromosome"/>
</dbReference>
<dbReference type="Gene3D" id="3.10.20.280">
    <property type="entry name" value="RnfH-like"/>
    <property type="match status" value="1"/>
</dbReference>
<dbReference type="HAMAP" id="MF_00460">
    <property type="entry name" value="UPF0125_RnfH"/>
    <property type="match status" value="1"/>
</dbReference>
<dbReference type="InterPro" id="IPR016155">
    <property type="entry name" value="Mopterin_synth/thiamin_S_b"/>
</dbReference>
<dbReference type="InterPro" id="IPR005346">
    <property type="entry name" value="RnfH"/>
</dbReference>
<dbReference type="InterPro" id="IPR037021">
    <property type="entry name" value="RnfH_sf"/>
</dbReference>
<dbReference type="NCBIfam" id="NF002490">
    <property type="entry name" value="PRK01777.1"/>
    <property type="match status" value="1"/>
</dbReference>
<dbReference type="PANTHER" id="PTHR37483">
    <property type="entry name" value="UPF0125 PROTEIN RATB"/>
    <property type="match status" value="1"/>
</dbReference>
<dbReference type="PANTHER" id="PTHR37483:SF1">
    <property type="entry name" value="UPF0125 PROTEIN RATB"/>
    <property type="match status" value="1"/>
</dbReference>
<dbReference type="Pfam" id="PF03658">
    <property type="entry name" value="Ub-RnfH"/>
    <property type="match status" value="1"/>
</dbReference>
<dbReference type="SUPFAM" id="SSF54285">
    <property type="entry name" value="MoaD/ThiS"/>
    <property type="match status" value="1"/>
</dbReference>